<dbReference type="EC" id="1.18.1.2"/>
<dbReference type="EMBL" id="BA000019">
    <property type="protein sequence ID" value="BAB75820.1"/>
    <property type="molecule type" value="Genomic_DNA"/>
</dbReference>
<dbReference type="PIR" id="AB2321">
    <property type="entry name" value="AB2321"/>
</dbReference>
<dbReference type="RefSeq" id="WP_010998260.1">
    <property type="nucleotide sequence ID" value="NZ_RSCN01000010.1"/>
</dbReference>
<dbReference type="SMR" id="P58558"/>
<dbReference type="STRING" id="103690.gene:10496169"/>
<dbReference type="DrugBank" id="DB03147">
    <property type="generic name" value="Flavin adenine dinucleotide"/>
</dbReference>
<dbReference type="DrugBank" id="DB03461">
    <property type="generic name" value="Nicotinamide adenine dinucleotide phosphate"/>
</dbReference>
<dbReference type="KEGG" id="ana:all4121"/>
<dbReference type="eggNOG" id="COG0369">
    <property type="taxonomic scope" value="Bacteria"/>
</dbReference>
<dbReference type="OrthoDB" id="9789468at2"/>
<dbReference type="Proteomes" id="UP000002483">
    <property type="component" value="Chromosome"/>
</dbReference>
<dbReference type="GO" id="GO:0030089">
    <property type="term" value="C:phycobilisome"/>
    <property type="evidence" value="ECO:0007669"/>
    <property type="project" value="UniProtKB-KW"/>
</dbReference>
<dbReference type="GO" id="GO:0031676">
    <property type="term" value="C:plasma membrane-derived thylakoid membrane"/>
    <property type="evidence" value="ECO:0007669"/>
    <property type="project" value="UniProtKB-SubCell"/>
</dbReference>
<dbReference type="GO" id="GO:0004324">
    <property type="term" value="F:ferredoxin-NADP+ reductase activity"/>
    <property type="evidence" value="ECO:0007669"/>
    <property type="project" value="UniProtKB-EC"/>
</dbReference>
<dbReference type="CDD" id="cd06208">
    <property type="entry name" value="CYPOR_like_FNR"/>
    <property type="match status" value="1"/>
</dbReference>
<dbReference type="FunFam" id="2.40.30.10:FF:000199">
    <property type="entry name" value="Ferredoxin--NADP reductase"/>
    <property type="match status" value="1"/>
</dbReference>
<dbReference type="FunFam" id="3.40.50.80:FF:000008">
    <property type="entry name" value="Ferredoxin--NADP reductase, chloroplastic"/>
    <property type="match status" value="1"/>
</dbReference>
<dbReference type="Gene3D" id="3.40.50.80">
    <property type="entry name" value="Nucleotide-binding domain of ferredoxin-NADP reductase (FNR) module"/>
    <property type="match status" value="1"/>
</dbReference>
<dbReference type="Gene3D" id="2.40.30.10">
    <property type="entry name" value="Translation factors"/>
    <property type="match status" value="1"/>
</dbReference>
<dbReference type="InterPro" id="IPR008213">
    <property type="entry name" value="CpcD-like_dom"/>
</dbReference>
<dbReference type="InterPro" id="IPR017927">
    <property type="entry name" value="FAD-bd_FR_type"/>
</dbReference>
<dbReference type="InterPro" id="IPR001709">
    <property type="entry name" value="Flavoprot_Pyr_Nucl_cyt_Rdtase"/>
</dbReference>
<dbReference type="InterPro" id="IPR015701">
    <property type="entry name" value="FNR"/>
</dbReference>
<dbReference type="InterPro" id="IPR039261">
    <property type="entry name" value="FNR_nucleotide-bd"/>
</dbReference>
<dbReference type="InterPro" id="IPR035442">
    <property type="entry name" value="FNR_plant_Cyanobacteria"/>
</dbReference>
<dbReference type="InterPro" id="IPR001433">
    <property type="entry name" value="OxRdtase_FAD/NAD-bd"/>
</dbReference>
<dbReference type="InterPro" id="IPR017938">
    <property type="entry name" value="Riboflavin_synthase-like_b-brl"/>
</dbReference>
<dbReference type="NCBIfam" id="NF045929">
    <property type="entry name" value="FNRPetHCyano"/>
    <property type="match status" value="1"/>
</dbReference>
<dbReference type="PANTHER" id="PTHR43314">
    <property type="match status" value="1"/>
</dbReference>
<dbReference type="Pfam" id="PF01383">
    <property type="entry name" value="CpcD"/>
    <property type="match status" value="1"/>
</dbReference>
<dbReference type="Pfam" id="PF00175">
    <property type="entry name" value="NAD_binding_1"/>
    <property type="match status" value="1"/>
</dbReference>
<dbReference type="PIRSF" id="PIRSF501178">
    <property type="entry name" value="FNR-PetH"/>
    <property type="match status" value="1"/>
</dbReference>
<dbReference type="PIRSF" id="PIRSF000361">
    <property type="entry name" value="Frd-NADP+_RD"/>
    <property type="match status" value="1"/>
</dbReference>
<dbReference type="PRINTS" id="PR00371">
    <property type="entry name" value="FPNCR"/>
</dbReference>
<dbReference type="SMART" id="SM01094">
    <property type="entry name" value="CpcD"/>
    <property type="match status" value="1"/>
</dbReference>
<dbReference type="SUPFAM" id="SSF52343">
    <property type="entry name" value="Ferredoxin reductase-like, C-terminal NADP-linked domain"/>
    <property type="match status" value="1"/>
</dbReference>
<dbReference type="SUPFAM" id="SSF63380">
    <property type="entry name" value="Riboflavin synthase domain-like"/>
    <property type="match status" value="1"/>
</dbReference>
<dbReference type="PROSITE" id="PS51441">
    <property type="entry name" value="CPCD_LIKE"/>
    <property type="match status" value="1"/>
</dbReference>
<dbReference type="PROSITE" id="PS51384">
    <property type="entry name" value="FAD_FR"/>
    <property type="match status" value="1"/>
</dbReference>
<comment type="catalytic activity">
    <reaction>
        <text>2 reduced [2Fe-2S]-[ferredoxin] + NADP(+) + H(+) = 2 oxidized [2Fe-2S]-[ferredoxin] + NADPH</text>
        <dbReference type="Rhea" id="RHEA:20125"/>
        <dbReference type="Rhea" id="RHEA-COMP:10000"/>
        <dbReference type="Rhea" id="RHEA-COMP:10001"/>
        <dbReference type="ChEBI" id="CHEBI:15378"/>
        <dbReference type="ChEBI" id="CHEBI:33737"/>
        <dbReference type="ChEBI" id="CHEBI:33738"/>
        <dbReference type="ChEBI" id="CHEBI:57783"/>
        <dbReference type="ChEBI" id="CHEBI:58349"/>
        <dbReference type="EC" id="1.18.1.2"/>
    </reaction>
</comment>
<comment type="cofactor">
    <cofactor>
        <name>FAD</name>
        <dbReference type="ChEBI" id="CHEBI:57692"/>
    </cofactor>
</comment>
<comment type="subcellular location">
    <subcellularLocation>
        <location evidence="1">Cellular thylakoid membrane</location>
        <topology evidence="1">Peripheral membrane protein</topology>
        <orientation evidence="1">Cytoplasmic side</orientation>
    </subcellularLocation>
    <text evidence="1">May be bound to the thylakoid membrane or anchored to the thylakoid-bound phycobilisomes.</text>
</comment>
<comment type="similarity">
    <text evidence="5">Belongs to the ferredoxin--NADP reductase type 1 family.</text>
</comment>
<evidence type="ECO:0000250" key="1"/>
<evidence type="ECO:0000255" key="2">
    <source>
        <dbReference type="PROSITE-ProRule" id="PRU00716"/>
    </source>
</evidence>
<evidence type="ECO:0000255" key="3">
    <source>
        <dbReference type="PROSITE-ProRule" id="PRU00771"/>
    </source>
</evidence>
<evidence type="ECO:0000256" key="4">
    <source>
        <dbReference type="SAM" id="MobiDB-lite"/>
    </source>
</evidence>
<evidence type="ECO:0000305" key="5"/>
<proteinExistence type="inferred from homology"/>
<name>FENR_NOSS1</name>
<keyword id="KW-0042">Antenna complex</keyword>
<keyword id="KW-0274">FAD</keyword>
<keyword id="KW-0285">Flavoprotein</keyword>
<keyword id="KW-0472">Membrane</keyword>
<keyword id="KW-0521">NADP</keyword>
<keyword id="KW-0560">Oxidoreductase</keyword>
<keyword id="KW-0605">Phycobilisome</keyword>
<keyword id="KW-1185">Reference proteome</keyword>
<keyword id="KW-0793">Thylakoid</keyword>
<gene>
    <name type="primary">petH</name>
    <name type="ordered locus">all4121</name>
</gene>
<organism>
    <name type="scientific">Nostoc sp. (strain PCC 7120 / SAG 25.82 / UTEX 2576)</name>
    <dbReference type="NCBI Taxonomy" id="103690"/>
    <lineage>
        <taxon>Bacteria</taxon>
        <taxon>Bacillati</taxon>
        <taxon>Cyanobacteriota</taxon>
        <taxon>Cyanophyceae</taxon>
        <taxon>Nostocales</taxon>
        <taxon>Nostocaceae</taxon>
        <taxon>Nostoc</taxon>
    </lineage>
</organism>
<reference key="1">
    <citation type="journal article" date="2001" name="DNA Res.">
        <title>Complete genomic sequence of the filamentous nitrogen-fixing cyanobacterium Anabaena sp. strain PCC 7120.</title>
        <authorList>
            <person name="Kaneko T."/>
            <person name="Nakamura Y."/>
            <person name="Wolk C.P."/>
            <person name="Kuritz T."/>
            <person name="Sasamoto S."/>
            <person name="Watanabe A."/>
            <person name="Iriguchi M."/>
            <person name="Ishikawa A."/>
            <person name="Kawashima K."/>
            <person name="Kimura T."/>
            <person name="Kishida Y."/>
            <person name="Kohara M."/>
            <person name="Matsumoto M."/>
            <person name="Matsuno A."/>
            <person name="Muraki A."/>
            <person name="Nakazaki N."/>
            <person name="Shimpo S."/>
            <person name="Sugimoto M."/>
            <person name="Takazawa M."/>
            <person name="Yamada M."/>
            <person name="Yasuda M."/>
            <person name="Tabata S."/>
        </authorList>
    </citation>
    <scope>NUCLEOTIDE SEQUENCE [LARGE SCALE GENOMIC DNA]</scope>
    <source>
        <strain>PCC 7120 / SAG 25.82 / UTEX 2576</strain>
    </source>
</reference>
<accession>P58558</accession>
<feature type="chain" id="PRO_0000167633" description="Ferredoxin--NADP reductase">
    <location>
        <begin position="1"/>
        <end position="440"/>
    </location>
</feature>
<feature type="domain" description="CpcD-like" evidence="3">
    <location>
        <begin position="17"/>
        <end position="75"/>
    </location>
</feature>
<feature type="domain" description="FAD-binding FR-type" evidence="2">
    <location>
        <begin position="155"/>
        <end position="279"/>
    </location>
</feature>
<feature type="region of interest" description="Disordered" evidence="4">
    <location>
        <begin position="98"/>
        <end position="142"/>
    </location>
</feature>
<feature type="compositionally biased region" description="Basic and acidic residues" evidence="4">
    <location>
        <begin position="122"/>
        <end position="133"/>
    </location>
</feature>
<feature type="binding site" evidence="1">
    <location>
        <begin position="214"/>
        <end position="217"/>
    </location>
    <ligand>
        <name>FAD</name>
        <dbReference type="ChEBI" id="CHEBI:57692"/>
    </ligand>
</feature>
<feature type="binding site" evidence="1">
    <location>
        <position position="217"/>
    </location>
    <ligand>
        <name>NADP(+)</name>
        <dbReference type="ChEBI" id="CHEBI:58349"/>
    </ligand>
</feature>
<feature type="binding site" evidence="1">
    <location>
        <begin position="235"/>
        <end position="237"/>
    </location>
    <ligand>
        <name>FAD</name>
        <dbReference type="ChEBI" id="CHEBI:57692"/>
    </ligand>
</feature>
<feature type="binding site" evidence="1">
    <location>
        <position position="237"/>
    </location>
    <ligand>
        <name>NADP(+)</name>
        <dbReference type="ChEBI" id="CHEBI:58349"/>
    </ligand>
</feature>
<feature type="binding site" evidence="1">
    <location>
        <position position="241"/>
    </location>
    <ligand>
        <name>FAD</name>
        <dbReference type="ChEBI" id="CHEBI:57692"/>
    </ligand>
</feature>
<feature type="binding site" evidence="1">
    <location>
        <begin position="253"/>
        <end position="255"/>
    </location>
    <ligand>
        <name>FAD</name>
        <dbReference type="ChEBI" id="CHEBI:57692"/>
    </ligand>
</feature>
<feature type="binding site" evidence="1">
    <location>
        <position position="294"/>
    </location>
    <ligand>
        <name>FAD</name>
        <dbReference type="ChEBI" id="CHEBI:57692"/>
    </ligand>
</feature>
<feature type="binding site" evidence="1">
    <location>
        <position position="294"/>
    </location>
    <ligand>
        <name>NADP(+)</name>
        <dbReference type="ChEBI" id="CHEBI:58349"/>
    </ligand>
</feature>
<feature type="binding site" evidence="1">
    <location>
        <begin position="330"/>
        <end position="331"/>
    </location>
    <ligand>
        <name>NADP(+)</name>
        <dbReference type="ChEBI" id="CHEBI:58349"/>
    </ligand>
</feature>
<feature type="binding site" evidence="1">
    <location>
        <begin position="360"/>
        <end position="361"/>
    </location>
    <ligand>
        <name>NADP(+)</name>
        <dbReference type="ChEBI" id="CHEBI:58349"/>
    </ligand>
</feature>
<feature type="binding site" evidence="1">
    <location>
        <begin position="370"/>
        <end position="374"/>
    </location>
    <ligand>
        <name>NADP(+)</name>
        <dbReference type="ChEBI" id="CHEBI:58349"/>
    </ligand>
</feature>
<feature type="binding site" evidence="1">
    <location>
        <begin position="399"/>
        <end position="400"/>
    </location>
    <ligand>
        <name>NADP(+)</name>
        <dbReference type="ChEBI" id="CHEBI:58349"/>
    </ligand>
</feature>
<feature type="binding site" evidence="1">
    <location>
        <position position="438"/>
    </location>
    <ligand>
        <name>NADP(+)</name>
        <dbReference type="ChEBI" id="CHEBI:58349"/>
    </ligand>
</feature>
<protein>
    <recommendedName>
        <fullName>Ferredoxin--NADP reductase</fullName>
        <shortName>FNR</shortName>
        <ecNumber>1.18.1.2</ecNumber>
    </recommendedName>
</protein>
<sequence>MSNQGAFDGAANVESGSRVFVYEVVGMRQNEETDQTNYPIRKSGSVFIRVPYNRMNQEMQRITRLGGKIVSIQTVSALQQLNGRTTIATVTDASSEIAKSEGNGKATPVKTDSGAKGFAKPPAEEQLKKKDNKGNTMTQAKAKHADVPVNLYRPNAPFIGKVISNEPLVKEGGIGIVQHIKFDLTGGNLKYIEGQSIGIIPPGVDKNGKPEKLRLYSIASTRHGDDVDDKTISLCVRQLEYKHPESGETVYGVCSTYLTHIEPGSEVKITGPVGKEMLLPDDPEANVIMLATGTGIAPMRTYLWRMFKDAERAANPEYQFKGFSWLVFGVPTTPNILYKEELEEIQQKYPDNFRLTYAISREQKNPQGGRMYIQDRVAEHADELWQLIKNEKTHTYICGLRGMEEGIDAALSAAAAKEGVTWSDYQKDLKKAGRWHVETY</sequence>